<comment type="function">
    <text evidence="1">Catalyzes the radical-mediated insertion of two sulfur atoms into the C-6 and C-8 positions of the octanoyl moiety bound to the lipoyl domains of lipoate-dependent enzymes, thereby converting the octanoylated domains into lipoylated derivatives.</text>
</comment>
<comment type="catalytic activity">
    <reaction evidence="1">
        <text>[[Fe-S] cluster scaffold protein carrying a second [4Fe-4S](2+) cluster] + N(6)-octanoyl-L-lysyl-[protein] + 2 oxidized [2Fe-2S]-[ferredoxin] + 2 S-adenosyl-L-methionine + 4 H(+) = [[Fe-S] cluster scaffold protein] + N(6)-[(R)-dihydrolipoyl]-L-lysyl-[protein] + 4 Fe(3+) + 2 hydrogen sulfide + 2 5'-deoxyadenosine + 2 L-methionine + 2 reduced [2Fe-2S]-[ferredoxin]</text>
        <dbReference type="Rhea" id="RHEA:16585"/>
        <dbReference type="Rhea" id="RHEA-COMP:9928"/>
        <dbReference type="Rhea" id="RHEA-COMP:10000"/>
        <dbReference type="Rhea" id="RHEA-COMP:10001"/>
        <dbReference type="Rhea" id="RHEA-COMP:10475"/>
        <dbReference type="Rhea" id="RHEA-COMP:14568"/>
        <dbReference type="Rhea" id="RHEA-COMP:14569"/>
        <dbReference type="ChEBI" id="CHEBI:15378"/>
        <dbReference type="ChEBI" id="CHEBI:17319"/>
        <dbReference type="ChEBI" id="CHEBI:29034"/>
        <dbReference type="ChEBI" id="CHEBI:29919"/>
        <dbReference type="ChEBI" id="CHEBI:33722"/>
        <dbReference type="ChEBI" id="CHEBI:33737"/>
        <dbReference type="ChEBI" id="CHEBI:33738"/>
        <dbReference type="ChEBI" id="CHEBI:57844"/>
        <dbReference type="ChEBI" id="CHEBI:59789"/>
        <dbReference type="ChEBI" id="CHEBI:78809"/>
        <dbReference type="ChEBI" id="CHEBI:83100"/>
        <dbReference type="EC" id="2.8.1.8"/>
    </reaction>
</comment>
<comment type="cofactor">
    <cofactor evidence="1">
        <name>[4Fe-4S] cluster</name>
        <dbReference type="ChEBI" id="CHEBI:49883"/>
    </cofactor>
    <text evidence="1">Binds 2 [4Fe-4S] clusters per subunit. One cluster is coordinated with 3 cysteines and an exchangeable S-adenosyl-L-methionine.</text>
</comment>
<comment type="pathway">
    <text evidence="1">Protein modification; protein lipoylation via endogenous pathway; protein N(6)-(lipoyl)lysine from octanoyl-[acyl-carrier-protein]: step 2/2.</text>
</comment>
<comment type="subcellular location">
    <subcellularLocation>
        <location evidence="1">Cytoplasm</location>
    </subcellularLocation>
</comment>
<comment type="similarity">
    <text evidence="1">Belongs to the radical SAM superfamily. Lipoyl synthase family.</text>
</comment>
<name>LIPA_ALCBS</name>
<gene>
    <name evidence="1" type="primary">lipA</name>
    <name type="ordered locus">ABO_1964</name>
</gene>
<dbReference type="EC" id="2.8.1.8" evidence="1"/>
<dbReference type="EMBL" id="AM286690">
    <property type="protein sequence ID" value="CAL17412.1"/>
    <property type="molecule type" value="Genomic_DNA"/>
</dbReference>
<dbReference type="RefSeq" id="WP_011589243.1">
    <property type="nucleotide sequence ID" value="NC_008260.1"/>
</dbReference>
<dbReference type="SMR" id="Q0VN36"/>
<dbReference type="STRING" id="393595.ABO_1964"/>
<dbReference type="KEGG" id="abo:ABO_1964"/>
<dbReference type="eggNOG" id="COG0320">
    <property type="taxonomic scope" value="Bacteria"/>
</dbReference>
<dbReference type="HOGENOM" id="CLU_033144_2_1_6"/>
<dbReference type="OrthoDB" id="9787898at2"/>
<dbReference type="UniPathway" id="UPA00538">
    <property type="reaction ID" value="UER00593"/>
</dbReference>
<dbReference type="Proteomes" id="UP000008871">
    <property type="component" value="Chromosome"/>
</dbReference>
<dbReference type="GO" id="GO:0005737">
    <property type="term" value="C:cytoplasm"/>
    <property type="evidence" value="ECO:0007669"/>
    <property type="project" value="UniProtKB-SubCell"/>
</dbReference>
<dbReference type="GO" id="GO:0051539">
    <property type="term" value="F:4 iron, 4 sulfur cluster binding"/>
    <property type="evidence" value="ECO:0007669"/>
    <property type="project" value="UniProtKB-UniRule"/>
</dbReference>
<dbReference type="GO" id="GO:0016992">
    <property type="term" value="F:lipoate synthase activity"/>
    <property type="evidence" value="ECO:0007669"/>
    <property type="project" value="UniProtKB-UniRule"/>
</dbReference>
<dbReference type="GO" id="GO:0046872">
    <property type="term" value="F:metal ion binding"/>
    <property type="evidence" value="ECO:0007669"/>
    <property type="project" value="UniProtKB-KW"/>
</dbReference>
<dbReference type="CDD" id="cd01335">
    <property type="entry name" value="Radical_SAM"/>
    <property type="match status" value="1"/>
</dbReference>
<dbReference type="FunFam" id="3.20.20.70:FF:000040">
    <property type="entry name" value="Lipoyl synthase"/>
    <property type="match status" value="1"/>
</dbReference>
<dbReference type="Gene3D" id="3.20.20.70">
    <property type="entry name" value="Aldolase class I"/>
    <property type="match status" value="1"/>
</dbReference>
<dbReference type="HAMAP" id="MF_00206">
    <property type="entry name" value="Lipoyl_synth"/>
    <property type="match status" value="1"/>
</dbReference>
<dbReference type="InterPro" id="IPR013785">
    <property type="entry name" value="Aldolase_TIM"/>
</dbReference>
<dbReference type="InterPro" id="IPR006638">
    <property type="entry name" value="Elp3/MiaA/NifB-like_rSAM"/>
</dbReference>
<dbReference type="InterPro" id="IPR031691">
    <property type="entry name" value="LIAS_N"/>
</dbReference>
<dbReference type="InterPro" id="IPR003698">
    <property type="entry name" value="Lipoyl_synth"/>
</dbReference>
<dbReference type="InterPro" id="IPR007197">
    <property type="entry name" value="rSAM"/>
</dbReference>
<dbReference type="NCBIfam" id="TIGR00510">
    <property type="entry name" value="lipA"/>
    <property type="match status" value="1"/>
</dbReference>
<dbReference type="NCBIfam" id="NF004019">
    <property type="entry name" value="PRK05481.1"/>
    <property type="match status" value="1"/>
</dbReference>
<dbReference type="NCBIfam" id="NF009544">
    <property type="entry name" value="PRK12928.1"/>
    <property type="match status" value="1"/>
</dbReference>
<dbReference type="PANTHER" id="PTHR10949">
    <property type="entry name" value="LIPOYL SYNTHASE"/>
    <property type="match status" value="1"/>
</dbReference>
<dbReference type="PANTHER" id="PTHR10949:SF0">
    <property type="entry name" value="LIPOYL SYNTHASE, MITOCHONDRIAL"/>
    <property type="match status" value="1"/>
</dbReference>
<dbReference type="Pfam" id="PF16881">
    <property type="entry name" value="LIAS_N"/>
    <property type="match status" value="1"/>
</dbReference>
<dbReference type="Pfam" id="PF04055">
    <property type="entry name" value="Radical_SAM"/>
    <property type="match status" value="1"/>
</dbReference>
<dbReference type="PIRSF" id="PIRSF005963">
    <property type="entry name" value="Lipoyl_synth"/>
    <property type="match status" value="1"/>
</dbReference>
<dbReference type="SFLD" id="SFLDF00271">
    <property type="entry name" value="lipoyl_synthase"/>
    <property type="match status" value="1"/>
</dbReference>
<dbReference type="SFLD" id="SFLDG01058">
    <property type="entry name" value="lipoyl_synthase_like"/>
    <property type="match status" value="1"/>
</dbReference>
<dbReference type="SMART" id="SM00729">
    <property type="entry name" value="Elp3"/>
    <property type="match status" value="1"/>
</dbReference>
<dbReference type="SUPFAM" id="SSF102114">
    <property type="entry name" value="Radical SAM enzymes"/>
    <property type="match status" value="1"/>
</dbReference>
<dbReference type="PROSITE" id="PS51918">
    <property type="entry name" value="RADICAL_SAM"/>
    <property type="match status" value="1"/>
</dbReference>
<organism>
    <name type="scientific">Alcanivorax borkumensis (strain ATCC 700651 / DSM 11573 / NCIMB 13689 / SK2)</name>
    <dbReference type="NCBI Taxonomy" id="393595"/>
    <lineage>
        <taxon>Bacteria</taxon>
        <taxon>Pseudomonadati</taxon>
        <taxon>Pseudomonadota</taxon>
        <taxon>Gammaproteobacteria</taxon>
        <taxon>Oceanospirillales</taxon>
        <taxon>Alcanivoracaceae</taxon>
        <taxon>Alcanivorax</taxon>
    </lineage>
</organism>
<keyword id="KW-0004">4Fe-4S</keyword>
<keyword id="KW-0963">Cytoplasm</keyword>
<keyword id="KW-0408">Iron</keyword>
<keyword id="KW-0411">Iron-sulfur</keyword>
<keyword id="KW-0479">Metal-binding</keyword>
<keyword id="KW-1185">Reference proteome</keyword>
<keyword id="KW-0949">S-adenosyl-L-methionine</keyword>
<keyword id="KW-0808">Transferase</keyword>
<reference key="1">
    <citation type="journal article" date="2006" name="Nat. Biotechnol.">
        <title>Genome sequence of the ubiquitous hydrocarbon-degrading marine bacterium Alcanivorax borkumensis.</title>
        <authorList>
            <person name="Schneiker S."/>
            <person name="Martins dos Santos V.A.P."/>
            <person name="Bartels D."/>
            <person name="Bekel T."/>
            <person name="Brecht M."/>
            <person name="Buhrmester J."/>
            <person name="Chernikova T.N."/>
            <person name="Denaro R."/>
            <person name="Ferrer M."/>
            <person name="Gertler C."/>
            <person name="Goesmann A."/>
            <person name="Golyshina O.V."/>
            <person name="Kaminski F."/>
            <person name="Khachane A.N."/>
            <person name="Lang S."/>
            <person name="Linke B."/>
            <person name="McHardy A.C."/>
            <person name="Meyer F."/>
            <person name="Nechitaylo T."/>
            <person name="Puehler A."/>
            <person name="Regenhardt D."/>
            <person name="Rupp O."/>
            <person name="Sabirova J.S."/>
            <person name="Selbitschka W."/>
            <person name="Yakimov M.M."/>
            <person name="Timmis K.N."/>
            <person name="Vorhoelter F.-J."/>
            <person name="Weidner S."/>
            <person name="Kaiser O."/>
            <person name="Golyshin P.N."/>
        </authorList>
    </citation>
    <scope>NUCLEOTIDE SEQUENCE [LARGE SCALE GENOMIC DNA]</scope>
    <source>
        <strain>ATCC 700651 / DSM 11573 / NCIMB 13689 / SK2</strain>
    </source>
</reference>
<evidence type="ECO:0000255" key="1">
    <source>
        <dbReference type="HAMAP-Rule" id="MF_00206"/>
    </source>
</evidence>
<evidence type="ECO:0000255" key="2">
    <source>
        <dbReference type="PROSITE-ProRule" id="PRU01266"/>
    </source>
</evidence>
<accession>Q0VN36</accession>
<feature type="chain" id="PRO_0000325224" description="Lipoyl synthase">
    <location>
        <begin position="1"/>
        <end position="325"/>
    </location>
</feature>
<feature type="domain" description="Radical SAM core" evidence="2">
    <location>
        <begin position="80"/>
        <end position="297"/>
    </location>
</feature>
<feature type="binding site" evidence="1">
    <location>
        <position position="68"/>
    </location>
    <ligand>
        <name>[4Fe-4S] cluster</name>
        <dbReference type="ChEBI" id="CHEBI:49883"/>
        <label>1</label>
    </ligand>
</feature>
<feature type="binding site" evidence="1">
    <location>
        <position position="73"/>
    </location>
    <ligand>
        <name>[4Fe-4S] cluster</name>
        <dbReference type="ChEBI" id="CHEBI:49883"/>
        <label>1</label>
    </ligand>
</feature>
<feature type="binding site" evidence="1">
    <location>
        <position position="79"/>
    </location>
    <ligand>
        <name>[4Fe-4S] cluster</name>
        <dbReference type="ChEBI" id="CHEBI:49883"/>
        <label>1</label>
    </ligand>
</feature>
<feature type="binding site" evidence="1">
    <location>
        <position position="94"/>
    </location>
    <ligand>
        <name>[4Fe-4S] cluster</name>
        <dbReference type="ChEBI" id="CHEBI:49883"/>
        <label>2</label>
        <note>4Fe-4S-S-AdoMet</note>
    </ligand>
</feature>
<feature type="binding site" evidence="1">
    <location>
        <position position="98"/>
    </location>
    <ligand>
        <name>[4Fe-4S] cluster</name>
        <dbReference type="ChEBI" id="CHEBI:49883"/>
        <label>2</label>
        <note>4Fe-4S-S-AdoMet</note>
    </ligand>
</feature>
<feature type="binding site" evidence="1">
    <location>
        <position position="101"/>
    </location>
    <ligand>
        <name>[4Fe-4S] cluster</name>
        <dbReference type="ChEBI" id="CHEBI:49883"/>
        <label>2</label>
        <note>4Fe-4S-S-AdoMet</note>
    </ligand>
</feature>
<feature type="binding site" evidence="1">
    <location>
        <position position="308"/>
    </location>
    <ligand>
        <name>[4Fe-4S] cluster</name>
        <dbReference type="ChEBI" id="CHEBI:49883"/>
        <label>1</label>
    </ligand>
</feature>
<proteinExistence type="inferred from homology"/>
<sequence length="325" mass="36458">MSEQAQAKRKVQIGDKLRGADKVRTIPMVNEETGYQRKPDWIRVRVPANGEIQRIKSLLRKQKLHTVCEEAACPNLPECFGGGTATFMIMGDICTRRCAFCDVGFGRPNALDAQEPLHLAESVENLGLNYVVITSVDRDDLADGGAEHFAECIRQVRALTPETRIEILTPDFRPCLDTAVEILAETAPDVFNHNIETVPELYKHIRPGARYQHSLDLLKRYKALRPDVSTKSGIMVGLGETFEQVINTIKDLRTHDVDMITIGQYLQPSKHHAPVDRFVHPDEFREYARVANELGFTSVASGPMVRSSYHADLQHKGVDVGLYKP</sequence>
<protein>
    <recommendedName>
        <fullName evidence="1">Lipoyl synthase</fullName>
        <ecNumber evidence="1">2.8.1.8</ecNumber>
    </recommendedName>
    <alternativeName>
        <fullName evidence="1">Lip-syn</fullName>
        <shortName evidence="1">LS</shortName>
    </alternativeName>
    <alternativeName>
        <fullName evidence="1">Lipoate synthase</fullName>
    </alternativeName>
    <alternativeName>
        <fullName evidence="1">Lipoic acid synthase</fullName>
    </alternativeName>
    <alternativeName>
        <fullName evidence="1">Sulfur insertion protein LipA</fullName>
    </alternativeName>
</protein>